<proteinExistence type="inferred from homology"/>
<dbReference type="EC" id="1.1.1.79" evidence="1"/>
<dbReference type="EC" id="1.1.1.81" evidence="1"/>
<dbReference type="EMBL" id="AM933172">
    <property type="protein sequence ID" value="CAR33493.1"/>
    <property type="molecule type" value="Genomic_DNA"/>
</dbReference>
<dbReference type="RefSeq" id="WP_000402561.1">
    <property type="nucleotide sequence ID" value="NC_011294.1"/>
</dbReference>
<dbReference type="SMR" id="B5QY30"/>
<dbReference type="KEGG" id="set:SEN1913"/>
<dbReference type="HOGENOM" id="CLU_019796_1_0_6"/>
<dbReference type="Proteomes" id="UP000000613">
    <property type="component" value="Chromosome"/>
</dbReference>
<dbReference type="GO" id="GO:0005737">
    <property type="term" value="C:cytoplasm"/>
    <property type="evidence" value="ECO:0007669"/>
    <property type="project" value="UniProtKB-SubCell"/>
</dbReference>
<dbReference type="GO" id="GO:0030267">
    <property type="term" value="F:glyoxylate reductase (NADPH) activity"/>
    <property type="evidence" value="ECO:0007669"/>
    <property type="project" value="UniProtKB-UniRule"/>
</dbReference>
<dbReference type="GO" id="GO:0008465">
    <property type="term" value="F:hydroxypyruvate reductase (NADH) activity"/>
    <property type="evidence" value="ECO:0007669"/>
    <property type="project" value="RHEA"/>
</dbReference>
<dbReference type="GO" id="GO:0120509">
    <property type="term" value="F:hydroxypyruvate reductase (NADPH) activity"/>
    <property type="evidence" value="ECO:0007669"/>
    <property type="project" value="RHEA"/>
</dbReference>
<dbReference type="GO" id="GO:0051287">
    <property type="term" value="F:NAD binding"/>
    <property type="evidence" value="ECO:0007669"/>
    <property type="project" value="InterPro"/>
</dbReference>
<dbReference type="CDD" id="cd12164">
    <property type="entry name" value="GDH_like_2"/>
    <property type="match status" value="1"/>
</dbReference>
<dbReference type="FunFam" id="3.40.50.720:FF:000110">
    <property type="entry name" value="Glyoxylate/hydroxypyruvate reductase A"/>
    <property type="match status" value="1"/>
</dbReference>
<dbReference type="Gene3D" id="3.40.50.720">
    <property type="entry name" value="NAD(P)-binding Rossmann-like Domain"/>
    <property type="match status" value="2"/>
</dbReference>
<dbReference type="HAMAP" id="MF_01666">
    <property type="entry name" value="2_Hacid_dh_C_GhrA"/>
    <property type="match status" value="1"/>
</dbReference>
<dbReference type="InterPro" id="IPR006140">
    <property type="entry name" value="D-isomer_DH_NAD-bd"/>
</dbReference>
<dbReference type="InterPro" id="IPR023514">
    <property type="entry name" value="GhrA_Enterobacterales"/>
</dbReference>
<dbReference type="InterPro" id="IPR036291">
    <property type="entry name" value="NAD(P)-bd_dom_sf"/>
</dbReference>
<dbReference type="NCBIfam" id="NF012013">
    <property type="entry name" value="PRK15469.1"/>
    <property type="match status" value="1"/>
</dbReference>
<dbReference type="PANTHER" id="PTHR43333">
    <property type="entry name" value="2-HACID_DH_C DOMAIN-CONTAINING PROTEIN"/>
    <property type="match status" value="1"/>
</dbReference>
<dbReference type="PANTHER" id="PTHR43333:SF1">
    <property type="entry name" value="D-ISOMER SPECIFIC 2-HYDROXYACID DEHYDROGENASE NAD-BINDING DOMAIN-CONTAINING PROTEIN"/>
    <property type="match status" value="1"/>
</dbReference>
<dbReference type="Pfam" id="PF02826">
    <property type="entry name" value="2-Hacid_dh_C"/>
    <property type="match status" value="1"/>
</dbReference>
<dbReference type="SUPFAM" id="SSF51735">
    <property type="entry name" value="NAD(P)-binding Rossmann-fold domains"/>
    <property type="match status" value="1"/>
</dbReference>
<protein>
    <recommendedName>
        <fullName evidence="1">Glyoxylate/hydroxypyruvate reductase A</fullName>
        <ecNumber evidence="1">1.1.1.79</ecNumber>
        <ecNumber evidence="1">1.1.1.81</ecNumber>
    </recommendedName>
    <alternativeName>
        <fullName evidence="1">2-ketoacid reductase</fullName>
    </alternativeName>
</protein>
<name>GHRA_SALEP</name>
<evidence type="ECO:0000255" key="1">
    <source>
        <dbReference type="HAMAP-Rule" id="MF_01666"/>
    </source>
</evidence>
<sequence length="312" mass="35017">MEIIFYHPTFNTAWWVNALEKALPHARVREWKVGDNNPADYALVWQPPVEMLAGRRLKAVFALGAGVDAILSKLNAHPEMLDASIPLFRLEDTGMGLQMQEYAVSQVLHWFRRFDDYQALKNQALWKPLPEYTREEFSVGIMGAGVLGAKVAESLQAWGFPLRCWSRSRKSWPGVESYVGREELHAFLNQTRVLINLLPNTAQTVGIINSELLDQLPDGAYVLNLARGVHVQEADLLAALDSGKLKGAMLDVFSQEPLPQESPLWRHPRVAMTPHIAAVTRPAEAIDYISRTITQLEKGEPVTGQVDRARGY</sequence>
<keyword id="KW-0963">Cytoplasm</keyword>
<keyword id="KW-0520">NAD</keyword>
<keyword id="KW-0521">NADP</keyword>
<keyword id="KW-0560">Oxidoreductase</keyword>
<feature type="chain" id="PRO_1000187275" description="Glyoxylate/hydroxypyruvate reductase A">
    <location>
        <begin position="1"/>
        <end position="312"/>
    </location>
</feature>
<feature type="active site" evidence="1">
    <location>
        <position position="227"/>
    </location>
</feature>
<feature type="active site" description="Proton donor" evidence="1">
    <location>
        <position position="275"/>
    </location>
</feature>
<accession>B5QY30</accession>
<reference key="1">
    <citation type="journal article" date="2008" name="Genome Res.">
        <title>Comparative genome analysis of Salmonella enteritidis PT4 and Salmonella gallinarum 287/91 provides insights into evolutionary and host adaptation pathways.</title>
        <authorList>
            <person name="Thomson N.R."/>
            <person name="Clayton D.J."/>
            <person name="Windhorst D."/>
            <person name="Vernikos G."/>
            <person name="Davidson S."/>
            <person name="Churcher C."/>
            <person name="Quail M.A."/>
            <person name="Stevens M."/>
            <person name="Jones M.A."/>
            <person name="Watson M."/>
            <person name="Barron A."/>
            <person name="Layton A."/>
            <person name="Pickard D."/>
            <person name="Kingsley R.A."/>
            <person name="Bignell A."/>
            <person name="Clark L."/>
            <person name="Harris B."/>
            <person name="Ormond D."/>
            <person name="Abdellah Z."/>
            <person name="Brooks K."/>
            <person name="Cherevach I."/>
            <person name="Chillingworth T."/>
            <person name="Woodward J."/>
            <person name="Norberczak H."/>
            <person name="Lord A."/>
            <person name="Arrowsmith C."/>
            <person name="Jagels K."/>
            <person name="Moule S."/>
            <person name="Mungall K."/>
            <person name="Saunders M."/>
            <person name="Whitehead S."/>
            <person name="Chabalgoity J.A."/>
            <person name="Maskell D."/>
            <person name="Humphreys T."/>
            <person name="Roberts M."/>
            <person name="Barrow P.A."/>
            <person name="Dougan G."/>
            <person name="Parkhill J."/>
        </authorList>
    </citation>
    <scope>NUCLEOTIDE SEQUENCE [LARGE SCALE GENOMIC DNA]</scope>
    <source>
        <strain>P125109</strain>
    </source>
</reference>
<gene>
    <name evidence="1" type="primary">ghrA</name>
    <name type="ordered locus">SEN1913</name>
</gene>
<organism>
    <name type="scientific">Salmonella enteritidis PT4 (strain P125109)</name>
    <dbReference type="NCBI Taxonomy" id="550537"/>
    <lineage>
        <taxon>Bacteria</taxon>
        <taxon>Pseudomonadati</taxon>
        <taxon>Pseudomonadota</taxon>
        <taxon>Gammaproteobacteria</taxon>
        <taxon>Enterobacterales</taxon>
        <taxon>Enterobacteriaceae</taxon>
        <taxon>Salmonella</taxon>
    </lineage>
</organism>
<comment type="function">
    <text evidence="1">Catalyzes the NADPH-dependent reduction of glyoxylate and hydroxypyruvate into glycolate and glycerate, respectively.</text>
</comment>
<comment type="catalytic activity">
    <reaction evidence="1">
        <text>glycolate + NADP(+) = glyoxylate + NADPH + H(+)</text>
        <dbReference type="Rhea" id="RHEA:10992"/>
        <dbReference type="ChEBI" id="CHEBI:15378"/>
        <dbReference type="ChEBI" id="CHEBI:29805"/>
        <dbReference type="ChEBI" id="CHEBI:36655"/>
        <dbReference type="ChEBI" id="CHEBI:57783"/>
        <dbReference type="ChEBI" id="CHEBI:58349"/>
        <dbReference type="EC" id="1.1.1.79"/>
    </reaction>
</comment>
<comment type="catalytic activity">
    <reaction evidence="1">
        <text>(R)-glycerate + NAD(+) = 3-hydroxypyruvate + NADH + H(+)</text>
        <dbReference type="Rhea" id="RHEA:17905"/>
        <dbReference type="ChEBI" id="CHEBI:15378"/>
        <dbReference type="ChEBI" id="CHEBI:16659"/>
        <dbReference type="ChEBI" id="CHEBI:17180"/>
        <dbReference type="ChEBI" id="CHEBI:57540"/>
        <dbReference type="ChEBI" id="CHEBI:57945"/>
        <dbReference type="EC" id="1.1.1.81"/>
    </reaction>
</comment>
<comment type="catalytic activity">
    <reaction evidence="1">
        <text>(R)-glycerate + NADP(+) = 3-hydroxypyruvate + NADPH + H(+)</text>
        <dbReference type="Rhea" id="RHEA:18657"/>
        <dbReference type="ChEBI" id="CHEBI:15378"/>
        <dbReference type="ChEBI" id="CHEBI:16659"/>
        <dbReference type="ChEBI" id="CHEBI:17180"/>
        <dbReference type="ChEBI" id="CHEBI:57783"/>
        <dbReference type="ChEBI" id="CHEBI:58349"/>
        <dbReference type="EC" id="1.1.1.81"/>
    </reaction>
</comment>
<comment type="subcellular location">
    <subcellularLocation>
        <location evidence="1">Cytoplasm</location>
    </subcellularLocation>
</comment>
<comment type="similarity">
    <text evidence="1">Belongs to the D-isomer specific 2-hydroxyacid dehydrogenase family. GhrA subfamily.</text>
</comment>